<reference key="1">
    <citation type="journal article" date="1998" name="Science">
        <title>Genome sequence of the nematode C. elegans: a platform for investigating biology.</title>
        <authorList>
            <consortium name="The C. elegans sequencing consortium"/>
        </authorList>
    </citation>
    <scope>NUCLEOTIDE SEQUENCE [LARGE SCALE GENOMIC DNA]</scope>
    <source>
        <strain>Bristol N2</strain>
    </source>
</reference>
<protein>
    <recommendedName>
        <fullName>UPF0046 protein C25E10.12</fullName>
    </recommendedName>
</protein>
<proteinExistence type="inferred from homology"/>
<gene>
    <name type="ORF">C25E10.12</name>
</gene>
<feature type="chain" id="PRO_0000053408" description="UPF0046 protein C25E10.12">
    <location>
        <begin position="1"/>
        <end position="281"/>
    </location>
</feature>
<organism>
    <name type="scientific">Caenorhabditis elegans</name>
    <dbReference type="NCBI Taxonomy" id="6239"/>
    <lineage>
        <taxon>Eukaryota</taxon>
        <taxon>Metazoa</taxon>
        <taxon>Ecdysozoa</taxon>
        <taxon>Nematoda</taxon>
        <taxon>Chromadorea</taxon>
        <taxon>Rhabditida</taxon>
        <taxon>Rhabditina</taxon>
        <taxon>Rhabditomorpha</taxon>
        <taxon>Rhabditoidea</taxon>
        <taxon>Rhabditidae</taxon>
        <taxon>Peloderinae</taxon>
        <taxon>Caenorhabditis</taxon>
    </lineage>
</organism>
<dbReference type="EMBL" id="FO080669">
    <property type="protein sequence ID" value="CCD65658.1"/>
    <property type="molecule type" value="Genomic_DNA"/>
</dbReference>
<dbReference type="PIR" id="T15613">
    <property type="entry name" value="T15613"/>
</dbReference>
<dbReference type="RefSeq" id="NP_505349.1">
    <property type="nucleotide sequence ID" value="NM_072948.5"/>
</dbReference>
<dbReference type="SMR" id="Q18161"/>
<dbReference type="BioGRID" id="47735">
    <property type="interactions" value="1"/>
</dbReference>
<dbReference type="FunCoup" id="Q18161">
    <property type="interactions" value="1"/>
</dbReference>
<dbReference type="PaxDb" id="6239-C25E10.12"/>
<dbReference type="PeptideAtlas" id="Q18161"/>
<dbReference type="EnsemblMetazoa" id="C25E10.12.1">
    <property type="protein sequence ID" value="C25E10.12.1"/>
    <property type="gene ID" value="WBGene00016101"/>
</dbReference>
<dbReference type="GeneID" id="182896"/>
<dbReference type="KEGG" id="cel:CELE_C25E10.12"/>
<dbReference type="UCSC" id="C25E10.12">
    <property type="organism name" value="c. elegans"/>
</dbReference>
<dbReference type="AGR" id="WB:WBGene00016101"/>
<dbReference type="CTD" id="182896"/>
<dbReference type="WormBase" id="C25E10.12">
    <property type="protein sequence ID" value="CE06874"/>
    <property type="gene ID" value="WBGene00016101"/>
</dbReference>
<dbReference type="eggNOG" id="KOG3947">
    <property type="taxonomic scope" value="Eukaryota"/>
</dbReference>
<dbReference type="GeneTree" id="ENSGT00390000007681"/>
<dbReference type="HOGENOM" id="CLU_041441_1_1_1"/>
<dbReference type="InParanoid" id="Q18161"/>
<dbReference type="OMA" id="EYDPIIF"/>
<dbReference type="OrthoDB" id="630188at2759"/>
<dbReference type="PhylomeDB" id="Q18161"/>
<dbReference type="PRO" id="PR:Q18161"/>
<dbReference type="Proteomes" id="UP000001940">
    <property type="component" value="Chromosome V"/>
</dbReference>
<dbReference type="Bgee" id="WBGene00016101">
    <property type="expression patterns" value="Expressed in larva and 3 other cell types or tissues"/>
</dbReference>
<dbReference type="GO" id="GO:0016787">
    <property type="term" value="F:hydrolase activity"/>
    <property type="evidence" value="ECO:0007669"/>
    <property type="project" value="InterPro"/>
</dbReference>
<dbReference type="CDD" id="cd07379">
    <property type="entry name" value="MPP_239FB"/>
    <property type="match status" value="1"/>
</dbReference>
<dbReference type="Gene3D" id="3.60.21.10">
    <property type="match status" value="1"/>
</dbReference>
<dbReference type="InterPro" id="IPR024201">
    <property type="entry name" value="Calcineurin-like_Pesterase"/>
</dbReference>
<dbReference type="InterPro" id="IPR004843">
    <property type="entry name" value="Calcineurin-like_PHP_ApaH"/>
</dbReference>
<dbReference type="InterPro" id="IPR029052">
    <property type="entry name" value="Metallo-depent_PP-like"/>
</dbReference>
<dbReference type="InterPro" id="IPR051693">
    <property type="entry name" value="UPF0046_metallophosphoest"/>
</dbReference>
<dbReference type="PANTHER" id="PTHR12905">
    <property type="entry name" value="METALLOPHOSPHOESTERASE"/>
    <property type="match status" value="1"/>
</dbReference>
<dbReference type="PANTHER" id="PTHR12905:SF32">
    <property type="entry name" value="UPF0046 PROTEIN C25E10.12"/>
    <property type="match status" value="1"/>
</dbReference>
<dbReference type="Pfam" id="PF00149">
    <property type="entry name" value="Metallophos"/>
    <property type="match status" value="1"/>
</dbReference>
<dbReference type="PIRSF" id="PIRSF035808">
    <property type="entry name" value="Pdiesterase_Brain_239"/>
    <property type="match status" value="1"/>
</dbReference>
<dbReference type="SUPFAM" id="SSF56300">
    <property type="entry name" value="Metallo-dependent phosphatases"/>
    <property type="match status" value="1"/>
</dbReference>
<evidence type="ECO:0000305" key="1"/>
<keyword id="KW-1185">Reference proteome</keyword>
<name>YBPT_CAEEL</name>
<sequence length="281" mass="31788">MSDNYVLVDPLSSKPIDCWKKYVKQGRVCEPIKPMRLDTPIFENKVRFVCISDTHEKLHEILPYIPDGDVLIHSGDFTNCGDIGEVIKFNAEIGSLPHKHKIVIAGNHELGFEDGEEMSERQLAGLNMLGINKAYELLSNCTYLCDKSYEAYGLKIYGAPWHSMPGYSFFRQRGQKILHKWNQIPAKIDVLMTHTPPLGHGDFNAWDKMDGILCGCAELLNTVEQRVKPKYHVFGHVHQKHGVTTNGETTFINAALCDHKLRSAYDPIIFDIPLPPGKTKQ</sequence>
<comment type="similarity">
    <text evidence="1">Belongs to the UPF0046 family.</text>
</comment>
<accession>Q18161</accession>